<name>SECA_MESHJ</name>
<organism>
    <name type="scientific">Mesomycoplasma hyopneumoniae (strain J / ATCC 25934 / NCTC 10110)</name>
    <name type="common">Mycoplasma hyopneumoniae</name>
    <dbReference type="NCBI Taxonomy" id="262719"/>
    <lineage>
        <taxon>Bacteria</taxon>
        <taxon>Bacillati</taxon>
        <taxon>Mycoplasmatota</taxon>
        <taxon>Mycoplasmoidales</taxon>
        <taxon>Metamycoplasmataceae</taxon>
        <taxon>Mesomycoplasma</taxon>
    </lineage>
</organism>
<dbReference type="EC" id="7.4.2.8" evidence="1"/>
<dbReference type="EMBL" id="AE017243">
    <property type="protein sequence ID" value="AAZ44176.1"/>
    <property type="status" value="ALT_INIT"/>
    <property type="molecule type" value="Genomic_DNA"/>
</dbReference>
<dbReference type="RefSeq" id="WP_011283898.1">
    <property type="nucleotide sequence ID" value="NC_007295.1"/>
</dbReference>
<dbReference type="SMR" id="Q4AAP5"/>
<dbReference type="GeneID" id="41334372"/>
<dbReference type="KEGG" id="mhj:MHJ_0082"/>
<dbReference type="eggNOG" id="COG0653">
    <property type="taxonomic scope" value="Bacteria"/>
</dbReference>
<dbReference type="HOGENOM" id="CLU_005314_3_0_14"/>
<dbReference type="OrthoDB" id="9805579at2"/>
<dbReference type="Proteomes" id="UP000000548">
    <property type="component" value="Chromosome"/>
</dbReference>
<dbReference type="GO" id="GO:0031522">
    <property type="term" value="C:cell envelope Sec protein transport complex"/>
    <property type="evidence" value="ECO:0007669"/>
    <property type="project" value="TreeGrafter"/>
</dbReference>
<dbReference type="GO" id="GO:0005829">
    <property type="term" value="C:cytosol"/>
    <property type="evidence" value="ECO:0007669"/>
    <property type="project" value="TreeGrafter"/>
</dbReference>
<dbReference type="GO" id="GO:0005886">
    <property type="term" value="C:plasma membrane"/>
    <property type="evidence" value="ECO:0007669"/>
    <property type="project" value="UniProtKB-SubCell"/>
</dbReference>
<dbReference type="GO" id="GO:0005524">
    <property type="term" value="F:ATP binding"/>
    <property type="evidence" value="ECO:0007669"/>
    <property type="project" value="UniProtKB-UniRule"/>
</dbReference>
<dbReference type="GO" id="GO:0008564">
    <property type="term" value="F:protein-exporting ATPase activity"/>
    <property type="evidence" value="ECO:0007669"/>
    <property type="project" value="UniProtKB-EC"/>
</dbReference>
<dbReference type="GO" id="GO:0065002">
    <property type="term" value="P:intracellular protein transmembrane transport"/>
    <property type="evidence" value="ECO:0007669"/>
    <property type="project" value="UniProtKB-UniRule"/>
</dbReference>
<dbReference type="GO" id="GO:0017038">
    <property type="term" value="P:protein import"/>
    <property type="evidence" value="ECO:0007669"/>
    <property type="project" value="InterPro"/>
</dbReference>
<dbReference type="GO" id="GO:0006605">
    <property type="term" value="P:protein targeting"/>
    <property type="evidence" value="ECO:0007669"/>
    <property type="project" value="UniProtKB-UniRule"/>
</dbReference>
<dbReference type="GO" id="GO:0043952">
    <property type="term" value="P:protein transport by the Sec complex"/>
    <property type="evidence" value="ECO:0007669"/>
    <property type="project" value="TreeGrafter"/>
</dbReference>
<dbReference type="CDD" id="cd17928">
    <property type="entry name" value="DEXDc_SecA"/>
    <property type="match status" value="1"/>
</dbReference>
<dbReference type="CDD" id="cd18803">
    <property type="entry name" value="SF2_C_secA"/>
    <property type="match status" value="1"/>
</dbReference>
<dbReference type="FunFam" id="3.40.50.300:FF:000429">
    <property type="entry name" value="Preprotein translocase subunit SecA"/>
    <property type="match status" value="1"/>
</dbReference>
<dbReference type="Gene3D" id="1.10.3060.10">
    <property type="entry name" value="Helical scaffold and wing domains of SecA"/>
    <property type="match status" value="1"/>
</dbReference>
<dbReference type="Gene3D" id="3.40.50.300">
    <property type="entry name" value="P-loop containing nucleotide triphosphate hydrolases"/>
    <property type="match status" value="3"/>
</dbReference>
<dbReference type="Gene3D" id="3.90.1440.10">
    <property type="entry name" value="SecA, preprotein cross-linking domain"/>
    <property type="match status" value="1"/>
</dbReference>
<dbReference type="HAMAP" id="MF_01382">
    <property type="entry name" value="SecA"/>
    <property type="match status" value="1"/>
</dbReference>
<dbReference type="InterPro" id="IPR014001">
    <property type="entry name" value="Helicase_ATP-bd"/>
</dbReference>
<dbReference type="InterPro" id="IPR001650">
    <property type="entry name" value="Helicase_C-like"/>
</dbReference>
<dbReference type="InterPro" id="IPR027417">
    <property type="entry name" value="P-loop_NTPase"/>
</dbReference>
<dbReference type="InterPro" id="IPR000185">
    <property type="entry name" value="SecA"/>
</dbReference>
<dbReference type="InterPro" id="IPR020937">
    <property type="entry name" value="SecA_CS"/>
</dbReference>
<dbReference type="InterPro" id="IPR011115">
    <property type="entry name" value="SecA_DEAD"/>
</dbReference>
<dbReference type="InterPro" id="IPR014018">
    <property type="entry name" value="SecA_motor_DEAD"/>
</dbReference>
<dbReference type="InterPro" id="IPR011130">
    <property type="entry name" value="SecA_preprotein_X-link_dom"/>
</dbReference>
<dbReference type="InterPro" id="IPR044722">
    <property type="entry name" value="SecA_SF2_C"/>
</dbReference>
<dbReference type="InterPro" id="IPR011116">
    <property type="entry name" value="SecA_Wing/Scaffold"/>
</dbReference>
<dbReference type="InterPro" id="IPR036266">
    <property type="entry name" value="SecA_Wing/Scaffold_sf"/>
</dbReference>
<dbReference type="InterPro" id="IPR036670">
    <property type="entry name" value="SecA_X-link_sf"/>
</dbReference>
<dbReference type="NCBIfam" id="NF006630">
    <property type="entry name" value="PRK09200.1"/>
    <property type="match status" value="1"/>
</dbReference>
<dbReference type="NCBIfam" id="TIGR00963">
    <property type="entry name" value="secA"/>
    <property type="match status" value="1"/>
</dbReference>
<dbReference type="PANTHER" id="PTHR30612:SF0">
    <property type="entry name" value="CHLOROPLAST PROTEIN-TRANSPORTING ATPASE"/>
    <property type="match status" value="1"/>
</dbReference>
<dbReference type="PANTHER" id="PTHR30612">
    <property type="entry name" value="SECA INNER MEMBRANE COMPONENT OF SEC PROTEIN SECRETION SYSTEM"/>
    <property type="match status" value="1"/>
</dbReference>
<dbReference type="Pfam" id="PF21090">
    <property type="entry name" value="P-loop_SecA"/>
    <property type="match status" value="2"/>
</dbReference>
<dbReference type="Pfam" id="PF07517">
    <property type="entry name" value="SecA_DEAD"/>
    <property type="match status" value="1"/>
</dbReference>
<dbReference type="Pfam" id="PF01043">
    <property type="entry name" value="SecA_PP_bind"/>
    <property type="match status" value="1"/>
</dbReference>
<dbReference type="Pfam" id="PF07516">
    <property type="entry name" value="SecA_SW"/>
    <property type="match status" value="1"/>
</dbReference>
<dbReference type="PRINTS" id="PR00906">
    <property type="entry name" value="SECA"/>
</dbReference>
<dbReference type="SMART" id="SM00957">
    <property type="entry name" value="SecA_DEAD"/>
    <property type="match status" value="1"/>
</dbReference>
<dbReference type="SMART" id="SM00958">
    <property type="entry name" value="SecA_PP_bind"/>
    <property type="match status" value="1"/>
</dbReference>
<dbReference type="SUPFAM" id="SSF81886">
    <property type="entry name" value="Helical scaffold and wing domains of SecA"/>
    <property type="match status" value="1"/>
</dbReference>
<dbReference type="SUPFAM" id="SSF52540">
    <property type="entry name" value="P-loop containing nucleoside triphosphate hydrolases"/>
    <property type="match status" value="2"/>
</dbReference>
<dbReference type="SUPFAM" id="SSF81767">
    <property type="entry name" value="Pre-protein crosslinking domain of SecA"/>
    <property type="match status" value="1"/>
</dbReference>
<dbReference type="PROSITE" id="PS01312">
    <property type="entry name" value="SECA"/>
    <property type="match status" value="1"/>
</dbReference>
<dbReference type="PROSITE" id="PS51196">
    <property type="entry name" value="SECA_MOTOR_DEAD"/>
    <property type="match status" value="1"/>
</dbReference>
<accession>Q4AAP5</accession>
<sequence length="983" mass="112243">MKNLFNFFKTSSELRLAYRLLKQINQKRSFYGAMTDFDLANQTNIFKKRLANGEKLKDIRVDAFAVAREATKRILGKTPYDVQILGGLILDMGSVAEMKTGEGKTIASIPPVYLNALLGQGVIVSTVNEYLAERDAEDNGKVYNFLGLTVGINKTEMDANTKRMMYNADITYSVHSELGFDYLRDNMVFSAAEKVQRGLNFCLIDEVDSILIDEAKTPLIISGGKTNLPAQYLSANQFVNTLIAEDFYIDEETKGIKLNDKGIDKANAFFGLRNLYEIQNSEIVHRIQNALRANKVMKRDVEYIVQDGKIALVDQFTGRIMAGRSYSEGLQQALQAKEGLEIEPETKTLATITYQNFFRLFKKLSGMTGTAKTEEQEFIDVYNMRVNVIPTNKPMIRKDEKDEIFATSHEKNQAIISEVERVHKMGQPILIGTSQVVDSETLSEMLNQKGLYHTVLNAKQNQLEAEIIAKAGRKNAITIATNMAGRGTDIILEPGVTELGGLYILGTDKAEARRIDNQLRGRSGRQGDVGISRFFISLQDQLFRRFTNFDQIFGAYGQTNGAIKGKYIHAVLLAAQKKIEGFNFDMRKTVLSYDDVIRQQRDLIYAQRDILLQIENFDHYIQKMIIRAVDIILSYDFIILPNQEIHYKNLINFLNDNLSRITHFNFGQIGIENYPIEQLNEFLIKQLETIYFKQIQSVLKENLGKTYFESERYIILSTLDSQWQNHIDTIDKLRSSANLVQYSQKNPYQIFTEEATKKFNILVAESAYQAIVSLFNNSNAEKIEYIKAILSDGTAISYPADSPQEIIDQIIASNEERIAAARKAKEEKQPEFIEKQLAKLKIEKVESGEEFELWKIGDSKLVNLKKEMPLDEKQNILVKMQQEQLEMMSEEEKNLIQEQNLEIVEIEEIEEEIQNENPQKVEFVDFKNDPDAYNKLIFGADYADKQLISSEEEDNNEKTNINNNEDLERTKGEAQQTAKNPNE</sequence>
<reference key="1">
    <citation type="journal article" date="2005" name="J. Bacteriol.">
        <title>Swine and poultry pathogens: the complete genome sequences of two strains of Mycoplasma hyopneumoniae and a strain of Mycoplasma synoviae.</title>
        <authorList>
            <person name="Vasconcelos A.T.R."/>
            <person name="Ferreira H.B."/>
            <person name="Bizarro C.V."/>
            <person name="Bonatto S.L."/>
            <person name="Carvalho M.O."/>
            <person name="Pinto P.M."/>
            <person name="Almeida D.F."/>
            <person name="Almeida L.G.P."/>
            <person name="Almeida R."/>
            <person name="Alves-Junior L."/>
            <person name="Assuncao E.N."/>
            <person name="Azevedo V.A.C."/>
            <person name="Bogo M.R."/>
            <person name="Brigido M.M."/>
            <person name="Brocchi M."/>
            <person name="Burity H.A."/>
            <person name="Camargo A.A."/>
            <person name="Camargo S.S."/>
            <person name="Carepo M.S."/>
            <person name="Carraro D.M."/>
            <person name="de Mattos Cascardo J.C."/>
            <person name="Castro L.A."/>
            <person name="Cavalcanti G."/>
            <person name="Chemale G."/>
            <person name="Collevatti R.G."/>
            <person name="Cunha C.W."/>
            <person name="Dallagiovanna B."/>
            <person name="Dambros B.P."/>
            <person name="Dellagostin O.A."/>
            <person name="Falcao C."/>
            <person name="Fantinatti-Garboggini F."/>
            <person name="Felipe M.S.S."/>
            <person name="Fiorentin L."/>
            <person name="Franco G.R."/>
            <person name="Freitas N.S.A."/>
            <person name="Frias D."/>
            <person name="Grangeiro T.B."/>
            <person name="Grisard E.C."/>
            <person name="Guimaraes C.T."/>
            <person name="Hungria M."/>
            <person name="Jardim S.N."/>
            <person name="Krieger M.A."/>
            <person name="Laurino J.P."/>
            <person name="Lima L.F.A."/>
            <person name="Lopes M.I."/>
            <person name="Loreto E.L.S."/>
            <person name="Madeira H.M.F."/>
            <person name="Manfio G.P."/>
            <person name="Maranhao A.Q."/>
            <person name="Martinkovics C.T."/>
            <person name="Medeiros S.R.B."/>
            <person name="Moreira M.A.M."/>
            <person name="Neiva M."/>
            <person name="Ramalho-Neto C.E."/>
            <person name="Nicolas M.F."/>
            <person name="Oliveira S.C."/>
            <person name="Paixao R.F.C."/>
            <person name="Pedrosa F.O."/>
            <person name="Pena S.D.J."/>
            <person name="Pereira M."/>
            <person name="Pereira-Ferrari L."/>
            <person name="Piffer I."/>
            <person name="Pinto L.S."/>
            <person name="Potrich D.P."/>
            <person name="Salim A.C.M."/>
            <person name="Santos F.R."/>
            <person name="Schmitt R."/>
            <person name="Schneider M.P.C."/>
            <person name="Schrank A."/>
            <person name="Schrank I.S."/>
            <person name="Schuck A.F."/>
            <person name="Seuanez H.N."/>
            <person name="Silva D.W."/>
            <person name="Silva R."/>
            <person name="Silva S.C."/>
            <person name="Soares C.M.A."/>
            <person name="Souza K.R.L."/>
            <person name="Souza R.C."/>
            <person name="Staats C.C."/>
            <person name="Steffens M.B.R."/>
            <person name="Teixeira S.M.R."/>
            <person name="Urmenyi T.P."/>
            <person name="Vainstein M.H."/>
            <person name="Zuccherato L.W."/>
            <person name="Simpson A.J.G."/>
            <person name="Zaha A."/>
        </authorList>
    </citation>
    <scope>NUCLEOTIDE SEQUENCE [LARGE SCALE GENOMIC DNA]</scope>
    <source>
        <strain>J / ATCC 25934 / NCTC 10110</strain>
    </source>
</reference>
<protein>
    <recommendedName>
        <fullName evidence="1">Protein translocase subunit SecA</fullName>
        <ecNumber evidence="1">7.4.2.8</ecNumber>
    </recommendedName>
</protein>
<keyword id="KW-0067">ATP-binding</keyword>
<keyword id="KW-1003">Cell membrane</keyword>
<keyword id="KW-0963">Cytoplasm</keyword>
<keyword id="KW-0472">Membrane</keyword>
<keyword id="KW-0547">Nucleotide-binding</keyword>
<keyword id="KW-0653">Protein transport</keyword>
<keyword id="KW-1278">Translocase</keyword>
<keyword id="KW-0811">Translocation</keyword>
<keyword id="KW-0813">Transport</keyword>
<comment type="function">
    <text evidence="1">Part of the Sec protein translocase complex. Interacts with the SecYEG preprotein conducting channel. Has a central role in coupling the hydrolysis of ATP to the transfer of proteins into and across the cell membrane, serving as an ATP-driven molecular motor driving the stepwise translocation of polypeptide chains across the membrane.</text>
</comment>
<comment type="catalytic activity">
    <reaction evidence="1">
        <text>ATP + H2O + cellular proteinSide 1 = ADP + phosphate + cellular proteinSide 2.</text>
        <dbReference type="EC" id="7.4.2.8"/>
    </reaction>
</comment>
<comment type="subunit">
    <text evidence="1">Monomer and homodimer. Part of the essential Sec protein translocation apparatus which comprises SecA, SecYEG and auxiliary proteins SecDF. Other proteins may also be involved.</text>
</comment>
<comment type="subcellular location">
    <subcellularLocation>
        <location evidence="1">Cell membrane</location>
        <topology evidence="1">Peripheral membrane protein</topology>
        <orientation evidence="1">Cytoplasmic side</orientation>
    </subcellularLocation>
    <subcellularLocation>
        <location evidence="1">Cytoplasm</location>
    </subcellularLocation>
    <text evidence="1">Distribution is 50-50.</text>
</comment>
<comment type="similarity">
    <text evidence="1">Belongs to the SecA family.</text>
</comment>
<comment type="sequence caution" evidence="3">
    <conflict type="erroneous initiation">
        <sequence resource="EMBL-CDS" id="AAZ44176"/>
    </conflict>
    <text>Truncated N-terminus.</text>
</comment>
<feature type="chain" id="PRO_0000320856" description="Protein translocase subunit SecA">
    <location>
        <begin position="1"/>
        <end position="983"/>
    </location>
</feature>
<feature type="region of interest" description="Disordered" evidence="2">
    <location>
        <begin position="948"/>
        <end position="983"/>
    </location>
</feature>
<feature type="compositionally biased region" description="Polar residues" evidence="2">
    <location>
        <begin position="973"/>
        <end position="983"/>
    </location>
</feature>
<feature type="binding site" evidence="1">
    <location>
        <position position="83"/>
    </location>
    <ligand>
        <name>ATP</name>
        <dbReference type="ChEBI" id="CHEBI:30616"/>
    </ligand>
</feature>
<feature type="binding site" evidence="1">
    <location>
        <begin position="101"/>
        <end position="105"/>
    </location>
    <ligand>
        <name>ATP</name>
        <dbReference type="ChEBI" id="CHEBI:30616"/>
    </ligand>
</feature>
<feature type="binding site" evidence="1">
    <location>
        <position position="489"/>
    </location>
    <ligand>
        <name>ATP</name>
        <dbReference type="ChEBI" id="CHEBI:30616"/>
    </ligand>
</feature>
<gene>
    <name evidence="1" type="primary">secA</name>
    <name type="ordered locus">MHJ_0082</name>
</gene>
<evidence type="ECO:0000255" key="1">
    <source>
        <dbReference type="HAMAP-Rule" id="MF_01382"/>
    </source>
</evidence>
<evidence type="ECO:0000256" key="2">
    <source>
        <dbReference type="SAM" id="MobiDB-lite"/>
    </source>
</evidence>
<evidence type="ECO:0000305" key="3"/>
<proteinExistence type="inferred from homology"/>